<name>GPSB_BACCR</name>
<organism>
    <name type="scientific">Bacillus cereus (strain ATCC 14579 / DSM 31 / CCUG 7414 / JCM 2152 / NBRC 15305 / NCIMB 9373 / NCTC 2599 / NRRL B-3711)</name>
    <dbReference type="NCBI Taxonomy" id="226900"/>
    <lineage>
        <taxon>Bacteria</taxon>
        <taxon>Bacillati</taxon>
        <taxon>Bacillota</taxon>
        <taxon>Bacilli</taxon>
        <taxon>Bacillales</taxon>
        <taxon>Bacillaceae</taxon>
        <taxon>Bacillus</taxon>
        <taxon>Bacillus cereus group</taxon>
    </lineage>
</organism>
<sequence>MISDKIKLTAKDILEKEFKTGMRGYQQEEVDKFLDMIIKDYEAFHKEFEQLKQQNARLKRELEEQKLAVTQVPQQPVQTPVAQPVYNNTNTDILKRLSNLEKAVFGSKLYE</sequence>
<proteinExistence type="inferred from homology"/>
<protein>
    <recommendedName>
        <fullName evidence="1">Cell cycle protein GpsB</fullName>
    </recommendedName>
    <alternativeName>
        <fullName evidence="1">Guiding PBP1-shuttling protein</fullName>
    </alternativeName>
</protein>
<comment type="function">
    <text evidence="1">Divisome component that associates with the complex late in its assembly, after the Z-ring is formed, and is dependent on DivIC and PBP2B for its recruitment to the divisome. Together with EzrA, is a key component of the system that regulates PBP1 localization during cell cycle progression. Its main role could be the removal of PBP1 from the cell pole after pole maturation is completed. Also contributes to the recruitment of PBP1 to the division complex. Not essential for septum formation.</text>
</comment>
<comment type="subunit">
    <text evidence="1">Forms polymers through the coiled coil domains. Interacts with PBP1, MreC and EzrA.</text>
</comment>
<comment type="subcellular location">
    <subcellularLocation>
        <location evidence="1">Cytoplasm</location>
    </subcellularLocation>
    <text evidence="1">Shuttles between the lateral wall and the division site in a cell cycle-dependent manner.</text>
</comment>
<comment type="similarity">
    <text evidence="1">Belongs to the GpsB family.</text>
</comment>
<reference key="1">
    <citation type="journal article" date="2003" name="Nature">
        <title>Genome sequence of Bacillus cereus and comparative analysis with Bacillus anthracis.</title>
        <authorList>
            <person name="Ivanova N."/>
            <person name="Sorokin A."/>
            <person name="Anderson I."/>
            <person name="Galleron N."/>
            <person name="Candelon B."/>
            <person name="Kapatral V."/>
            <person name="Bhattacharyya A."/>
            <person name="Reznik G."/>
            <person name="Mikhailova N."/>
            <person name="Lapidus A."/>
            <person name="Chu L."/>
            <person name="Mazur M."/>
            <person name="Goltsman E."/>
            <person name="Larsen N."/>
            <person name="D'Souza M."/>
            <person name="Walunas T."/>
            <person name="Grechkin Y."/>
            <person name="Pusch G."/>
            <person name="Haselkorn R."/>
            <person name="Fonstein M."/>
            <person name="Ehrlich S.D."/>
            <person name="Overbeek R."/>
            <person name="Kyrpides N.C."/>
        </authorList>
    </citation>
    <scope>NUCLEOTIDE SEQUENCE [LARGE SCALE GENOMIC DNA]</scope>
    <source>
        <strain>ATCC 14579 / DSM 31 / CCUG 7414 / JCM 2152 / NBRC 15305 / NCIMB 9373 / NCTC 2599 / NRRL B-3711</strain>
    </source>
</reference>
<feature type="chain" id="PRO_0000337908" description="Cell cycle protein GpsB">
    <location>
        <begin position="1"/>
        <end position="111"/>
    </location>
</feature>
<feature type="coiled-coil region" evidence="1">
    <location>
        <begin position="38"/>
        <end position="72"/>
    </location>
</feature>
<gene>
    <name evidence="1" type="primary">gpsB</name>
    <name type="ordered locus">BC_1562</name>
</gene>
<evidence type="ECO:0000255" key="1">
    <source>
        <dbReference type="HAMAP-Rule" id="MF_02011"/>
    </source>
</evidence>
<keyword id="KW-0131">Cell cycle</keyword>
<keyword id="KW-0132">Cell division</keyword>
<keyword id="KW-0133">Cell shape</keyword>
<keyword id="KW-0175">Coiled coil</keyword>
<keyword id="KW-0963">Cytoplasm</keyword>
<keyword id="KW-1185">Reference proteome</keyword>
<dbReference type="EMBL" id="AE016877">
    <property type="protein sequence ID" value="AAP08541.1"/>
    <property type="molecule type" value="Genomic_DNA"/>
</dbReference>
<dbReference type="RefSeq" id="NP_831340.1">
    <property type="nucleotide sequence ID" value="NC_004722.1"/>
</dbReference>
<dbReference type="RefSeq" id="WP_000622431.1">
    <property type="nucleotide sequence ID" value="NZ_CP138336.1"/>
</dbReference>
<dbReference type="SMR" id="Q81FL9"/>
<dbReference type="STRING" id="226900.BC_1562"/>
<dbReference type="GeneID" id="67466037"/>
<dbReference type="KEGG" id="bce:BC1562"/>
<dbReference type="PATRIC" id="fig|226900.8.peg.1540"/>
<dbReference type="HOGENOM" id="CLU_140309_1_0_9"/>
<dbReference type="OrthoDB" id="389699at2"/>
<dbReference type="Proteomes" id="UP000001417">
    <property type="component" value="Chromosome"/>
</dbReference>
<dbReference type="GO" id="GO:0005737">
    <property type="term" value="C:cytoplasm"/>
    <property type="evidence" value="ECO:0007669"/>
    <property type="project" value="UniProtKB-SubCell"/>
</dbReference>
<dbReference type="GO" id="GO:0051301">
    <property type="term" value="P:cell division"/>
    <property type="evidence" value="ECO:0007669"/>
    <property type="project" value="UniProtKB-UniRule"/>
</dbReference>
<dbReference type="GO" id="GO:0009273">
    <property type="term" value="P:peptidoglycan-based cell wall biogenesis"/>
    <property type="evidence" value="ECO:0000318"/>
    <property type="project" value="GO_Central"/>
</dbReference>
<dbReference type="GO" id="GO:0008360">
    <property type="term" value="P:regulation of cell shape"/>
    <property type="evidence" value="ECO:0007669"/>
    <property type="project" value="UniProtKB-UniRule"/>
</dbReference>
<dbReference type="Gene3D" id="6.10.250.660">
    <property type="match status" value="1"/>
</dbReference>
<dbReference type="HAMAP" id="MF_02011">
    <property type="entry name" value="GpsB"/>
    <property type="match status" value="1"/>
</dbReference>
<dbReference type="InterPro" id="IPR011229">
    <property type="entry name" value="Cell_cycle_GpsB"/>
</dbReference>
<dbReference type="InterPro" id="IPR019933">
    <property type="entry name" value="DivIVA_domain"/>
</dbReference>
<dbReference type="InterPro" id="IPR007793">
    <property type="entry name" value="DivIVA_fam"/>
</dbReference>
<dbReference type="NCBIfam" id="TIGR03544">
    <property type="entry name" value="DivI1A_domain"/>
    <property type="match status" value="1"/>
</dbReference>
<dbReference type="NCBIfam" id="NF010725">
    <property type="entry name" value="PRK14127.1"/>
    <property type="match status" value="1"/>
</dbReference>
<dbReference type="PANTHER" id="PTHR35794:SF1">
    <property type="entry name" value="CELL CYCLE PROTEIN GPSB"/>
    <property type="match status" value="1"/>
</dbReference>
<dbReference type="PANTHER" id="PTHR35794">
    <property type="entry name" value="CELL DIVISION PROTEIN DIVIVA"/>
    <property type="match status" value="1"/>
</dbReference>
<dbReference type="Pfam" id="PF05103">
    <property type="entry name" value="DivIVA"/>
    <property type="match status" value="1"/>
</dbReference>
<dbReference type="PIRSF" id="PIRSF029938">
    <property type="entry name" value="UCP029938"/>
    <property type="match status" value="1"/>
</dbReference>
<accession>Q81FL9</accession>